<comment type="function">
    <text evidence="1">Catalyzes the reversible interconversion of serine and glycine with tetrahydrofolate (THF) serving as the one-carbon carrier. This reaction serves as the major source of one-carbon groups required for the biosynthesis of purines, thymidylate, methionine, and other important biomolecules. Also exhibits THF-independent aldolase activity toward beta-hydroxyamino acids, producing glycine and aldehydes, via a retro-aldol mechanism.</text>
</comment>
<comment type="catalytic activity">
    <reaction evidence="1">
        <text>(6R)-5,10-methylene-5,6,7,8-tetrahydrofolate + glycine + H2O = (6S)-5,6,7,8-tetrahydrofolate + L-serine</text>
        <dbReference type="Rhea" id="RHEA:15481"/>
        <dbReference type="ChEBI" id="CHEBI:15377"/>
        <dbReference type="ChEBI" id="CHEBI:15636"/>
        <dbReference type="ChEBI" id="CHEBI:33384"/>
        <dbReference type="ChEBI" id="CHEBI:57305"/>
        <dbReference type="ChEBI" id="CHEBI:57453"/>
        <dbReference type="EC" id="2.1.2.1"/>
    </reaction>
</comment>
<comment type="cofactor">
    <cofactor evidence="1">
        <name>pyridoxal 5'-phosphate</name>
        <dbReference type="ChEBI" id="CHEBI:597326"/>
    </cofactor>
</comment>
<comment type="pathway">
    <text evidence="1">One-carbon metabolism; tetrahydrofolate interconversion.</text>
</comment>
<comment type="pathway">
    <text evidence="1">Amino-acid biosynthesis; glycine biosynthesis; glycine from L-serine: step 1/1.</text>
</comment>
<comment type="subunit">
    <text evidence="1">Homodimer.</text>
</comment>
<comment type="subcellular location">
    <subcellularLocation>
        <location evidence="1">Cytoplasm</location>
    </subcellularLocation>
</comment>
<comment type="similarity">
    <text evidence="1">Belongs to the SHMT family.</text>
</comment>
<sequence>MYKNLKLNDKYVQKAINSEFKRQRNFIELIASENYVSDDVLKAQGSVLTNKYGEGYPYRRYYGSCENVDMVEQVAIDRLKEIFKVNYANVQPYSGSVANAAAIASVVPNGGKIMGLSLKSGGHLTHGYKISFSGIFYNSITYEVGKNGKLDYEEIKKIALAEKPDLIICGYSAYPRLIDFKKFREIADLCGAKLMADVAHIAGLIAGGVHPSPVGYAHVITSTTHKTFRGARGGVIMTNDEEIAKKVDRWVFPGYQGGPLFHAIAGKAIAFYEALQPSFKTYAENIVKNAKVFSEAFIKKGVEVVSGGTDNHLLLINVKSSYNITGKEAENFLEKINITINKNSIPFDELPPLVTSGIRLGTAAMTSRNFTKWEELAEIIDYSLRNLEFLNSKSKAARDKVKELKNRVLSFNKEFPILKKY</sequence>
<feature type="chain" id="PRO_0000234990" description="Serine hydroxymethyltransferase">
    <location>
        <begin position="1"/>
        <end position="421"/>
    </location>
</feature>
<feature type="binding site" evidence="1">
    <location>
        <position position="118"/>
    </location>
    <ligand>
        <name>(6S)-5,6,7,8-tetrahydrofolate</name>
        <dbReference type="ChEBI" id="CHEBI:57453"/>
    </ligand>
</feature>
<feature type="binding site" evidence="1">
    <location>
        <begin position="122"/>
        <end position="124"/>
    </location>
    <ligand>
        <name>(6S)-5,6,7,8-tetrahydrofolate</name>
        <dbReference type="ChEBI" id="CHEBI:57453"/>
    </ligand>
</feature>
<feature type="binding site" evidence="1">
    <location>
        <position position="242"/>
    </location>
    <ligand>
        <name>(6S)-5,6,7,8-tetrahydrofolate</name>
        <dbReference type="ChEBI" id="CHEBI:57453"/>
    </ligand>
</feature>
<feature type="site" description="Plays an important role in substrate specificity" evidence="1">
    <location>
        <position position="225"/>
    </location>
</feature>
<feature type="modified residue" description="N6-(pyridoxal phosphate)lysine" evidence="1">
    <location>
        <position position="226"/>
    </location>
</feature>
<gene>
    <name evidence="1" type="primary">glyA</name>
    <name type="ordered locus">MS53_0305</name>
</gene>
<keyword id="KW-0028">Amino-acid biosynthesis</keyword>
<keyword id="KW-0963">Cytoplasm</keyword>
<keyword id="KW-0554">One-carbon metabolism</keyword>
<keyword id="KW-0663">Pyridoxal phosphate</keyword>
<keyword id="KW-1185">Reference proteome</keyword>
<keyword id="KW-0808">Transferase</keyword>
<dbReference type="EC" id="2.1.2.1" evidence="1"/>
<dbReference type="EMBL" id="AE017245">
    <property type="protein sequence ID" value="AAZ43718.1"/>
    <property type="molecule type" value="Genomic_DNA"/>
</dbReference>
<dbReference type="RefSeq" id="WP_011283450.1">
    <property type="nucleotide sequence ID" value="NC_007294.1"/>
</dbReference>
<dbReference type="SMR" id="Q4A6A3"/>
<dbReference type="STRING" id="262723.MS53_0305"/>
<dbReference type="KEGG" id="msy:MS53_0305"/>
<dbReference type="eggNOG" id="COG0112">
    <property type="taxonomic scope" value="Bacteria"/>
</dbReference>
<dbReference type="HOGENOM" id="CLU_022477_2_1_14"/>
<dbReference type="OrthoDB" id="9803846at2"/>
<dbReference type="UniPathway" id="UPA00193"/>
<dbReference type="UniPathway" id="UPA00288">
    <property type="reaction ID" value="UER01023"/>
</dbReference>
<dbReference type="Proteomes" id="UP000000549">
    <property type="component" value="Chromosome"/>
</dbReference>
<dbReference type="GO" id="GO:0005829">
    <property type="term" value="C:cytosol"/>
    <property type="evidence" value="ECO:0007669"/>
    <property type="project" value="TreeGrafter"/>
</dbReference>
<dbReference type="GO" id="GO:0004372">
    <property type="term" value="F:glycine hydroxymethyltransferase activity"/>
    <property type="evidence" value="ECO:0007669"/>
    <property type="project" value="UniProtKB-UniRule"/>
</dbReference>
<dbReference type="GO" id="GO:0030170">
    <property type="term" value="F:pyridoxal phosphate binding"/>
    <property type="evidence" value="ECO:0007669"/>
    <property type="project" value="UniProtKB-UniRule"/>
</dbReference>
<dbReference type="GO" id="GO:0019264">
    <property type="term" value="P:glycine biosynthetic process from serine"/>
    <property type="evidence" value="ECO:0007669"/>
    <property type="project" value="UniProtKB-UniRule"/>
</dbReference>
<dbReference type="GO" id="GO:0035999">
    <property type="term" value="P:tetrahydrofolate interconversion"/>
    <property type="evidence" value="ECO:0007669"/>
    <property type="project" value="UniProtKB-UniRule"/>
</dbReference>
<dbReference type="CDD" id="cd00378">
    <property type="entry name" value="SHMT"/>
    <property type="match status" value="1"/>
</dbReference>
<dbReference type="FunFam" id="3.40.640.10:FF:000001">
    <property type="entry name" value="Serine hydroxymethyltransferase"/>
    <property type="match status" value="1"/>
</dbReference>
<dbReference type="Gene3D" id="3.90.1150.10">
    <property type="entry name" value="Aspartate Aminotransferase, domain 1"/>
    <property type="match status" value="1"/>
</dbReference>
<dbReference type="Gene3D" id="3.40.640.10">
    <property type="entry name" value="Type I PLP-dependent aspartate aminotransferase-like (Major domain)"/>
    <property type="match status" value="1"/>
</dbReference>
<dbReference type="HAMAP" id="MF_00051">
    <property type="entry name" value="SHMT"/>
    <property type="match status" value="1"/>
</dbReference>
<dbReference type="InterPro" id="IPR015424">
    <property type="entry name" value="PyrdxlP-dep_Trfase"/>
</dbReference>
<dbReference type="InterPro" id="IPR015421">
    <property type="entry name" value="PyrdxlP-dep_Trfase_major"/>
</dbReference>
<dbReference type="InterPro" id="IPR015422">
    <property type="entry name" value="PyrdxlP-dep_Trfase_small"/>
</dbReference>
<dbReference type="InterPro" id="IPR001085">
    <property type="entry name" value="Ser_HO-MeTrfase"/>
</dbReference>
<dbReference type="InterPro" id="IPR049943">
    <property type="entry name" value="Ser_HO-MeTrfase-like"/>
</dbReference>
<dbReference type="InterPro" id="IPR019798">
    <property type="entry name" value="Ser_HO-MeTrfase_PLP_BS"/>
</dbReference>
<dbReference type="InterPro" id="IPR039429">
    <property type="entry name" value="SHMT-like_dom"/>
</dbReference>
<dbReference type="NCBIfam" id="NF000586">
    <property type="entry name" value="PRK00011.1"/>
    <property type="match status" value="1"/>
</dbReference>
<dbReference type="PANTHER" id="PTHR11680">
    <property type="entry name" value="SERINE HYDROXYMETHYLTRANSFERASE"/>
    <property type="match status" value="1"/>
</dbReference>
<dbReference type="PANTHER" id="PTHR11680:SF35">
    <property type="entry name" value="SERINE HYDROXYMETHYLTRANSFERASE 1"/>
    <property type="match status" value="1"/>
</dbReference>
<dbReference type="Pfam" id="PF00464">
    <property type="entry name" value="SHMT"/>
    <property type="match status" value="1"/>
</dbReference>
<dbReference type="PIRSF" id="PIRSF000412">
    <property type="entry name" value="SHMT"/>
    <property type="match status" value="1"/>
</dbReference>
<dbReference type="SUPFAM" id="SSF53383">
    <property type="entry name" value="PLP-dependent transferases"/>
    <property type="match status" value="1"/>
</dbReference>
<dbReference type="PROSITE" id="PS00096">
    <property type="entry name" value="SHMT"/>
    <property type="match status" value="1"/>
</dbReference>
<protein>
    <recommendedName>
        <fullName evidence="1">Serine hydroxymethyltransferase</fullName>
        <shortName evidence="1">SHMT</shortName>
        <shortName evidence="1">Serine methylase</shortName>
        <ecNumber evidence="1">2.1.2.1</ecNumber>
    </recommendedName>
</protein>
<reference key="1">
    <citation type="journal article" date="2005" name="J. Bacteriol.">
        <title>Swine and poultry pathogens: the complete genome sequences of two strains of Mycoplasma hyopneumoniae and a strain of Mycoplasma synoviae.</title>
        <authorList>
            <person name="Vasconcelos A.T.R."/>
            <person name="Ferreira H.B."/>
            <person name="Bizarro C.V."/>
            <person name="Bonatto S.L."/>
            <person name="Carvalho M.O."/>
            <person name="Pinto P.M."/>
            <person name="Almeida D.F."/>
            <person name="Almeida L.G.P."/>
            <person name="Almeida R."/>
            <person name="Alves-Junior L."/>
            <person name="Assuncao E.N."/>
            <person name="Azevedo V.A.C."/>
            <person name="Bogo M.R."/>
            <person name="Brigido M.M."/>
            <person name="Brocchi M."/>
            <person name="Burity H.A."/>
            <person name="Camargo A.A."/>
            <person name="Camargo S.S."/>
            <person name="Carepo M.S."/>
            <person name="Carraro D.M."/>
            <person name="de Mattos Cascardo J.C."/>
            <person name="Castro L.A."/>
            <person name="Cavalcanti G."/>
            <person name="Chemale G."/>
            <person name="Collevatti R.G."/>
            <person name="Cunha C.W."/>
            <person name="Dallagiovanna B."/>
            <person name="Dambros B.P."/>
            <person name="Dellagostin O.A."/>
            <person name="Falcao C."/>
            <person name="Fantinatti-Garboggini F."/>
            <person name="Felipe M.S.S."/>
            <person name="Fiorentin L."/>
            <person name="Franco G.R."/>
            <person name="Freitas N.S.A."/>
            <person name="Frias D."/>
            <person name="Grangeiro T.B."/>
            <person name="Grisard E.C."/>
            <person name="Guimaraes C.T."/>
            <person name="Hungria M."/>
            <person name="Jardim S.N."/>
            <person name="Krieger M.A."/>
            <person name="Laurino J.P."/>
            <person name="Lima L.F.A."/>
            <person name="Lopes M.I."/>
            <person name="Loreto E.L.S."/>
            <person name="Madeira H.M.F."/>
            <person name="Manfio G.P."/>
            <person name="Maranhao A.Q."/>
            <person name="Martinkovics C.T."/>
            <person name="Medeiros S.R.B."/>
            <person name="Moreira M.A.M."/>
            <person name="Neiva M."/>
            <person name="Ramalho-Neto C.E."/>
            <person name="Nicolas M.F."/>
            <person name="Oliveira S.C."/>
            <person name="Paixao R.F.C."/>
            <person name="Pedrosa F.O."/>
            <person name="Pena S.D.J."/>
            <person name="Pereira M."/>
            <person name="Pereira-Ferrari L."/>
            <person name="Piffer I."/>
            <person name="Pinto L.S."/>
            <person name="Potrich D.P."/>
            <person name="Salim A.C.M."/>
            <person name="Santos F.R."/>
            <person name="Schmitt R."/>
            <person name="Schneider M.P.C."/>
            <person name="Schrank A."/>
            <person name="Schrank I.S."/>
            <person name="Schuck A.F."/>
            <person name="Seuanez H.N."/>
            <person name="Silva D.W."/>
            <person name="Silva R."/>
            <person name="Silva S.C."/>
            <person name="Soares C.M.A."/>
            <person name="Souza K.R.L."/>
            <person name="Souza R.C."/>
            <person name="Staats C.C."/>
            <person name="Steffens M.B.R."/>
            <person name="Teixeira S.M.R."/>
            <person name="Urmenyi T.P."/>
            <person name="Vainstein M.H."/>
            <person name="Zuccherato L.W."/>
            <person name="Simpson A.J.G."/>
            <person name="Zaha A."/>
        </authorList>
    </citation>
    <scope>NUCLEOTIDE SEQUENCE [LARGE SCALE GENOMIC DNA]</scope>
    <source>
        <strain>53</strain>
    </source>
</reference>
<proteinExistence type="inferred from homology"/>
<accession>Q4A6A3</accession>
<organism>
    <name type="scientific">Mycoplasmopsis synoviae (strain 53)</name>
    <name type="common">Mycoplasma synoviae</name>
    <dbReference type="NCBI Taxonomy" id="262723"/>
    <lineage>
        <taxon>Bacteria</taxon>
        <taxon>Bacillati</taxon>
        <taxon>Mycoplasmatota</taxon>
        <taxon>Mycoplasmoidales</taxon>
        <taxon>Metamycoplasmataceae</taxon>
        <taxon>Mycoplasmopsis</taxon>
    </lineage>
</organism>
<name>GLYA_MYCS5</name>
<evidence type="ECO:0000255" key="1">
    <source>
        <dbReference type="HAMAP-Rule" id="MF_00051"/>
    </source>
</evidence>